<dbReference type="EMBL" id="CP000948">
    <property type="protein sequence ID" value="ACB02917.1"/>
    <property type="molecule type" value="Genomic_DNA"/>
</dbReference>
<dbReference type="RefSeq" id="WP_000124850.1">
    <property type="nucleotide sequence ID" value="NC_010473.1"/>
</dbReference>
<dbReference type="SMR" id="B1XG23"/>
<dbReference type="GeneID" id="98388757"/>
<dbReference type="KEGG" id="ecd:ECDH10B_1852"/>
<dbReference type="HOGENOM" id="CLU_123265_0_1_6"/>
<dbReference type="GO" id="GO:1990904">
    <property type="term" value="C:ribonucleoprotein complex"/>
    <property type="evidence" value="ECO:0007669"/>
    <property type="project" value="UniProtKB-KW"/>
</dbReference>
<dbReference type="GO" id="GO:0005840">
    <property type="term" value="C:ribosome"/>
    <property type="evidence" value="ECO:0007669"/>
    <property type="project" value="UniProtKB-KW"/>
</dbReference>
<dbReference type="GO" id="GO:0019843">
    <property type="term" value="F:rRNA binding"/>
    <property type="evidence" value="ECO:0007669"/>
    <property type="project" value="UniProtKB-UniRule"/>
</dbReference>
<dbReference type="GO" id="GO:0003735">
    <property type="term" value="F:structural constituent of ribosome"/>
    <property type="evidence" value="ECO:0007669"/>
    <property type="project" value="InterPro"/>
</dbReference>
<dbReference type="GO" id="GO:0000027">
    <property type="term" value="P:ribosomal large subunit assembly"/>
    <property type="evidence" value="ECO:0007669"/>
    <property type="project" value="UniProtKB-UniRule"/>
</dbReference>
<dbReference type="GO" id="GO:0006412">
    <property type="term" value="P:translation"/>
    <property type="evidence" value="ECO:0007669"/>
    <property type="project" value="InterPro"/>
</dbReference>
<dbReference type="CDD" id="cd07026">
    <property type="entry name" value="Ribosomal_L20"/>
    <property type="match status" value="1"/>
</dbReference>
<dbReference type="FunFam" id="1.10.1900.20:FF:000001">
    <property type="entry name" value="50S ribosomal protein L20"/>
    <property type="match status" value="1"/>
</dbReference>
<dbReference type="Gene3D" id="6.10.160.10">
    <property type="match status" value="1"/>
</dbReference>
<dbReference type="Gene3D" id="1.10.1900.20">
    <property type="entry name" value="Ribosomal protein L20"/>
    <property type="match status" value="1"/>
</dbReference>
<dbReference type="HAMAP" id="MF_00382">
    <property type="entry name" value="Ribosomal_bL20"/>
    <property type="match status" value="1"/>
</dbReference>
<dbReference type="InterPro" id="IPR005813">
    <property type="entry name" value="Ribosomal_bL20"/>
</dbReference>
<dbReference type="InterPro" id="IPR049946">
    <property type="entry name" value="RIBOSOMAL_L20_CS"/>
</dbReference>
<dbReference type="InterPro" id="IPR035566">
    <property type="entry name" value="Ribosomal_protein_bL20_C"/>
</dbReference>
<dbReference type="NCBIfam" id="TIGR01032">
    <property type="entry name" value="rplT_bact"/>
    <property type="match status" value="1"/>
</dbReference>
<dbReference type="PANTHER" id="PTHR10986">
    <property type="entry name" value="39S RIBOSOMAL PROTEIN L20"/>
    <property type="match status" value="1"/>
</dbReference>
<dbReference type="Pfam" id="PF00453">
    <property type="entry name" value="Ribosomal_L20"/>
    <property type="match status" value="1"/>
</dbReference>
<dbReference type="PRINTS" id="PR00062">
    <property type="entry name" value="RIBOSOMALL20"/>
</dbReference>
<dbReference type="SUPFAM" id="SSF74731">
    <property type="entry name" value="Ribosomal protein L20"/>
    <property type="match status" value="1"/>
</dbReference>
<dbReference type="PROSITE" id="PS00937">
    <property type="entry name" value="RIBOSOMAL_L20"/>
    <property type="match status" value="1"/>
</dbReference>
<sequence length="118" mass="13497">MARVKRGVIARARHKKILKQAKGYYGARSRVYRVAFQAVIKAGQYAYRDRRQRKRQFRQLWIARINAAARQNGISYSKFINGLKKASVEIDRKILADIAVFDKVAFTALVEKAKAALA</sequence>
<name>RL20_ECODH</name>
<accession>B1XG23</accession>
<keyword id="KW-0687">Ribonucleoprotein</keyword>
<keyword id="KW-0689">Ribosomal protein</keyword>
<keyword id="KW-0694">RNA-binding</keyword>
<keyword id="KW-0699">rRNA-binding</keyword>
<protein>
    <recommendedName>
        <fullName evidence="1">Large ribosomal subunit protein bL20</fullName>
    </recommendedName>
    <alternativeName>
        <fullName evidence="2">50S ribosomal protein L20</fullName>
    </alternativeName>
</protein>
<comment type="function">
    <text evidence="1">Binds directly to 23S ribosomal RNA and is necessary for the in vitro assembly process of the 50S ribosomal subunit. It is not involved in the protein synthesizing functions of that subunit.</text>
</comment>
<comment type="similarity">
    <text evidence="1">Belongs to the bacterial ribosomal protein bL20 family.</text>
</comment>
<evidence type="ECO:0000255" key="1">
    <source>
        <dbReference type="HAMAP-Rule" id="MF_00382"/>
    </source>
</evidence>
<evidence type="ECO:0000305" key="2"/>
<proteinExistence type="inferred from homology"/>
<reference key="1">
    <citation type="journal article" date="2008" name="J. Bacteriol.">
        <title>The complete genome sequence of Escherichia coli DH10B: insights into the biology of a laboratory workhorse.</title>
        <authorList>
            <person name="Durfee T."/>
            <person name="Nelson R."/>
            <person name="Baldwin S."/>
            <person name="Plunkett G. III"/>
            <person name="Burland V."/>
            <person name="Mau B."/>
            <person name="Petrosino J.F."/>
            <person name="Qin X."/>
            <person name="Muzny D.M."/>
            <person name="Ayele M."/>
            <person name="Gibbs R.A."/>
            <person name="Csorgo B."/>
            <person name="Posfai G."/>
            <person name="Weinstock G.M."/>
            <person name="Blattner F.R."/>
        </authorList>
    </citation>
    <scope>NUCLEOTIDE SEQUENCE [LARGE SCALE GENOMIC DNA]</scope>
    <source>
        <strain>K12 / DH10B</strain>
    </source>
</reference>
<organism>
    <name type="scientific">Escherichia coli (strain K12 / DH10B)</name>
    <dbReference type="NCBI Taxonomy" id="316385"/>
    <lineage>
        <taxon>Bacteria</taxon>
        <taxon>Pseudomonadati</taxon>
        <taxon>Pseudomonadota</taxon>
        <taxon>Gammaproteobacteria</taxon>
        <taxon>Enterobacterales</taxon>
        <taxon>Enterobacteriaceae</taxon>
        <taxon>Escherichia</taxon>
    </lineage>
</organism>
<feature type="chain" id="PRO_1000122312" description="Large ribosomal subunit protein bL20">
    <location>
        <begin position="1"/>
        <end position="118"/>
    </location>
</feature>
<gene>
    <name evidence="1" type="primary">rplT</name>
    <name type="ordered locus">ECDH10B_1852</name>
</gene>